<protein>
    <recommendedName>
        <fullName evidence="1">4-hydroxy-tetrahydrodipicolinate reductase</fullName>
        <shortName evidence="1">HTPA reductase</shortName>
        <ecNumber evidence="1">1.17.1.8</ecNumber>
    </recommendedName>
</protein>
<reference key="1">
    <citation type="journal article" date="2009" name="PLoS ONE">
        <title>Salmonella paratyphi C: genetic divergence from Salmonella choleraesuis and pathogenic convergence with Salmonella typhi.</title>
        <authorList>
            <person name="Liu W.-Q."/>
            <person name="Feng Y."/>
            <person name="Wang Y."/>
            <person name="Zou Q.-H."/>
            <person name="Chen F."/>
            <person name="Guo J.-T."/>
            <person name="Peng Y.-H."/>
            <person name="Jin Y."/>
            <person name="Li Y.-G."/>
            <person name="Hu S.-N."/>
            <person name="Johnston R.N."/>
            <person name="Liu G.-R."/>
            <person name="Liu S.-L."/>
        </authorList>
    </citation>
    <scope>NUCLEOTIDE SEQUENCE [LARGE SCALE GENOMIC DNA]</scope>
    <source>
        <strain>RKS4594</strain>
    </source>
</reference>
<organism>
    <name type="scientific">Salmonella paratyphi C (strain RKS4594)</name>
    <dbReference type="NCBI Taxonomy" id="476213"/>
    <lineage>
        <taxon>Bacteria</taxon>
        <taxon>Pseudomonadati</taxon>
        <taxon>Pseudomonadota</taxon>
        <taxon>Gammaproteobacteria</taxon>
        <taxon>Enterobacterales</taxon>
        <taxon>Enterobacteriaceae</taxon>
        <taxon>Salmonella</taxon>
    </lineage>
</organism>
<dbReference type="EC" id="1.17.1.8" evidence="1"/>
<dbReference type="EMBL" id="CP000857">
    <property type="protein sequence ID" value="ACN44260.1"/>
    <property type="molecule type" value="Genomic_DNA"/>
</dbReference>
<dbReference type="RefSeq" id="WP_000544038.1">
    <property type="nucleotide sequence ID" value="NC_012125.1"/>
</dbReference>
<dbReference type="SMR" id="C0Q4K5"/>
<dbReference type="KEGG" id="sei:SPC_0068"/>
<dbReference type="HOGENOM" id="CLU_047479_2_1_6"/>
<dbReference type="UniPathway" id="UPA00034">
    <property type="reaction ID" value="UER00018"/>
</dbReference>
<dbReference type="Proteomes" id="UP000001599">
    <property type="component" value="Chromosome"/>
</dbReference>
<dbReference type="GO" id="GO:0005829">
    <property type="term" value="C:cytosol"/>
    <property type="evidence" value="ECO:0007669"/>
    <property type="project" value="TreeGrafter"/>
</dbReference>
<dbReference type="GO" id="GO:0008839">
    <property type="term" value="F:4-hydroxy-tetrahydrodipicolinate reductase"/>
    <property type="evidence" value="ECO:0007669"/>
    <property type="project" value="UniProtKB-EC"/>
</dbReference>
<dbReference type="GO" id="GO:0051287">
    <property type="term" value="F:NAD binding"/>
    <property type="evidence" value="ECO:0007669"/>
    <property type="project" value="UniProtKB-UniRule"/>
</dbReference>
<dbReference type="GO" id="GO:0050661">
    <property type="term" value="F:NADP binding"/>
    <property type="evidence" value="ECO:0007669"/>
    <property type="project" value="UniProtKB-UniRule"/>
</dbReference>
<dbReference type="GO" id="GO:0016726">
    <property type="term" value="F:oxidoreductase activity, acting on CH or CH2 groups, NAD or NADP as acceptor"/>
    <property type="evidence" value="ECO:0007669"/>
    <property type="project" value="UniProtKB-UniRule"/>
</dbReference>
<dbReference type="GO" id="GO:0019877">
    <property type="term" value="P:diaminopimelate biosynthetic process"/>
    <property type="evidence" value="ECO:0007669"/>
    <property type="project" value="UniProtKB-UniRule"/>
</dbReference>
<dbReference type="GO" id="GO:0009089">
    <property type="term" value="P:lysine biosynthetic process via diaminopimelate"/>
    <property type="evidence" value="ECO:0007669"/>
    <property type="project" value="UniProtKB-UniRule"/>
</dbReference>
<dbReference type="CDD" id="cd02274">
    <property type="entry name" value="DHDPR_N"/>
    <property type="match status" value="1"/>
</dbReference>
<dbReference type="FunFam" id="3.30.360.10:FF:000004">
    <property type="entry name" value="4-hydroxy-tetrahydrodipicolinate reductase"/>
    <property type="match status" value="1"/>
</dbReference>
<dbReference type="FunFam" id="3.40.50.720:FF:000048">
    <property type="entry name" value="4-hydroxy-tetrahydrodipicolinate reductase"/>
    <property type="match status" value="1"/>
</dbReference>
<dbReference type="Gene3D" id="3.30.360.10">
    <property type="entry name" value="Dihydrodipicolinate Reductase, domain 2"/>
    <property type="match status" value="1"/>
</dbReference>
<dbReference type="Gene3D" id="3.40.50.720">
    <property type="entry name" value="NAD(P)-binding Rossmann-like Domain"/>
    <property type="match status" value="1"/>
</dbReference>
<dbReference type="HAMAP" id="MF_00102">
    <property type="entry name" value="DapB"/>
    <property type="match status" value="1"/>
</dbReference>
<dbReference type="InterPro" id="IPR022663">
    <property type="entry name" value="DapB_C"/>
</dbReference>
<dbReference type="InterPro" id="IPR000846">
    <property type="entry name" value="DapB_N"/>
</dbReference>
<dbReference type="InterPro" id="IPR022664">
    <property type="entry name" value="DapB_N_CS"/>
</dbReference>
<dbReference type="InterPro" id="IPR023940">
    <property type="entry name" value="DHDPR_bac"/>
</dbReference>
<dbReference type="InterPro" id="IPR036291">
    <property type="entry name" value="NAD(P)-bd_dom_sf"/>
</dbReference>
<dbReference type="NCBIfam" id="TIGR00036">
    <property type="entry name" value="dapB"/>
    <property type="match status" value="1"/>
</dbReference>
<dbReference type="PANTHER" id="PTHR20836:SF0">
    <property type="entry name" value="4-HYDROXY-TETRAHYDRODIPICOLINATE REDUCTASE 1, CHLOROPLASTIC-RELATED"/>
    <property type="match status" value="1"/>
</dbReference>
<dbReference type="PANTHER" id="PTHR20836">
    <property type="entry name" value="DIHYDRODIPICOLINATE REDUCTASE"/>
    <property type="match status" value="1"/>
</dbReference>
<dbReference type="Pfam" id="PF05173">
    <property type="entry name" value="DapB_C"/>
    <property type="match status" value="1"/>
</dbReference>
<dbReference type="Pfam" id="PF01113">
    <property type="entry name" value="DapB_N"/>
    <property type="match status" value="1"/>
</dbReference>
<dbReference type="PIRSF" id="PIRSF000161">
    <property type="entry name" value="DHPR"/>
    <property type="match status" value="1"/>
</dbReference>
<dbReference type="SUPFAM" id="SSF55347">
    <property type="entry name" value="Glyceraldehyde-3-phosphate dehydrogenase-like, C-terminal domain"/>
    <property type="match status" value="1"/>
</dbReference>
<dbReference type="SUPFAM" id="SSF51735">
    <property type="entry name" value="NAD(P)-binding Rossmann-fold domains"/>
    <property type="match status" value="1"/>
</dbReference>
<dbReference type="PROSITE" id="PS01298">
    <property type="entry name" value="DAPB"/>
    <property type="match status" value="1"/>
</dbReference>
<keyword id="KW-0028">Amino-acid biosynthesis</keyword>
<keyword id="KW-0963">Cytoplasm</keyword>
<keyword id="KW-0220">Diaminopimelate biosynthesis</keyword>
<keyword id="KW-0457">Lysine biosynthesis</keyword>
<keyword id="KW-0520">NAD</keyword>
<keyword id="KW-0521">NADP</keyword>
<keyword id="KW-0560">Oxidoreductase</keyword>
<sequence length="273" mass="28868">MHEAQIRVAIAGAGGRMGRQLIQAAMAMEGVQLGAALEREGSSLLGSDAGELAGVGKSGVTVQSSLEAVKDDFDVFIDFTRPEGTLTHLAFCRQHGKGMVIGTTGFDDAGKQAIREASQEIAIVFAANFSVGVNVMLKLLEKAAKVMGDYSDIEIIEAHHRHKVDAPSGTALAMGEAIAGALDKDLKDCAVYSREGYTGERVAGTIGFATVRAGDIVGEHTAMFADIGERVEITHKASSRMTFANGALRSALWLKTKKNGLFDMRDVLGLDVL</sequence>
<accession>C0Q4K5</accession>
<gene>
    <name evidence="1" type="primary">dapB</name>
    <name type="ordered locus">SPC_0068</name>
</gene>
<feature type="chain" id="PRO_1000118864" description="4-hydroxy-tetrahydrodipicolinate reductase">
    <location>
        <begin position="1"/>
        <end position="273"/>
    </location>
</feature>
<feature type="active site" description="Proton donor/acceptor" evidence="1">
    <location>
        <position position="159"/>
    </location>
</feature>
<feature type="active site" description="Proton donor" evidence="1">
    <location>
        <position position="163"/>
    </location>
</feature>
<feature type="binding site" evidence="1">
    <location>
        <begin position="12"/>
        <end position="17"/>
    </location>
    <ligand>
        <name>NAD(+)</name>
        <dbReference type="ChEBI" id="CHEBI:57540"/>
    </ligand>
</feature>
<feature type="binding site" evidence="1">
    <location>
        <position position="38"/>
    </location>
    <ligand>
        <name>NAD(+)</name>
        <dbReference type="ChEBI" id="CHEBI:57540"/>
    </ligand>
</feature>
<feature type="binding site" evidence="1">
    <location>
        <position position="39"/>
    </location>
    <ligand>
        <name>NADP(+)</name>
        <dbReference type="ChEBI" id="CHEBI:58349"/>
    </ligand>
</feature>
<feature type="binding site" evidence="1">
    <location>
        <begin position="102"/>
        <end position="104"/>
    </location>
    <ligand>
        <name>NAD(+)</name>
        <dbReference type="ChEBI" id="CHEBI:57540"/>
    </ligand>
</feature>
<feature type="binding site" evidence="1">
    <location>
        <begin position="126"/>
        <end position="129"/>
    </location>
    <ligand>
        <name>NAD(+)</name>
        <dbReference type="ChEBI" id="CHEBI:57540"/>
    </ligand>
</feature>
<feature type="binding site" evidence="1">
    <location>
        <position position="160"/>
    </location>
    <ligand>
        <name>(S)-2,3,4,5-tetrahydrodipicolinate</name>
        <dbReference type="ChEBI" id="CHEBI:16845"/>
    </ligand>
</feature>
<feature type="binding site" evidence="1">
    <location>
        <begin position="169"/>
        <end position="170"/>
    </location>
    <ligand>
        <name>(S)-2,3,4,5-tetrahydrodipicolinate</name>
        <dbReference type="ChEBI" id="CHEBI:16845"/>
    </ligand>
</feature>
<name>DAPB_SALPC</name>
<evidence type="ECO:0000255" key="1">
    <source>
        <dbReference type="HAMAP-Rule" id="MF_00102"/>
    </source>
</evidence>
<evidence type="ECO:0000305" key="2"/>
<proteinExistence type="inferred from homology"/>
<comment type="function">
    <text evidence="1">Catalyzes the conversion of 4-hydroxy-tetrahydrodipicolinate (HTPA) to tetrahydrodipicolinate.</text>
</comment>
<comment type="catalytic activity">
    <reaction evidence="1">
        <text>(S)-2,3,4,5-tetrahydrodipicolinate + NAD(+) + H2O = (2S,4S)-4-hydroxy-2,3,4,5-tetrahydrodipicolinate + NADH + H(+)</text>
        <dbReference type="Rhea" id="RHEA:35323"/>
        <dbReference type="ChEBI" id="CHEBI:15377"/>
        <dbReference type="ChEBI" id="CHEBI:15378"/>
        <dbReference type="ChEBI" id="CHEBI:16845"/>
        <dbReference type="ChEBI" id="CHEBI:57540"/>
        <dbReference type="ChEBI" id="CHEBI:57945"/>
        <dbReference type="ChEBI" id="CHEBI:67139"/>
        <dbReference type="EC" id="1.17.1.8"/>
    </reaction>
</comment>
<comment type="catalytic activity">
    <reaction evidence="1">
        <text>(S)-2,3,4,5-tetrahydrodipicolinate + NADP(+) + H2O = (2S,4S)-4-hydroxy-2,3,4,5-tetrahydrodipicolinate + NADPH + H(+)</text>
        <dbReference type="Rhea" id="RHEA:35331"/>
        <dbReference type="ChEBI" id="CHEBI:15377"/>
        <dbReference type="ChEBI" id="CHEBI:15378"/>
        <dbReference type="ChEBI" id="CHEBI:16845"/>
        <dbReference type="ChEBI" id="CHEBI:57783"/>
        <dbReference type="ChEBI" id="CHEBI:58349"/>
        <dbReference type="ChEBI" id="CHEBI:67139"/>
        <dbReference type="EC" id="1.17.1.8"/>
    </reaction>
</comment>
<comment type="pathway">
    <text evidence="1">Amino-acid biosynthesis; L-lysine biosynthesis via DAP pathway; (S)-tetrahydrodipicolinate from L-aspartate: step 4/4.</text>
</comment>
<comment type="subunit">
    <text evidence="1">Homotetramer.</text>
</comment>
<comment type="subcellular location">
    <subcellularLocation>
        <location evidence="1">Cytoplasm</location>
    </subcellularLocation>
</comment>
<comment type="similarity">
    <text evidence="1">Belongs to the DapB family.</text>
</comment>
<comment type="caution">
    <text evidence="2">Was originally thought to be a dihydrodipicolinate reductase (DHDPR), catalyzing the conversion of dihydrodipicolinate to tetrahydrodipicolinate. However, it was shown in E.coli that the substrate of the enzymatic reaction is not dihydrodipicolinate (DHDP) but in fact (2S,4S)-4-hydroxy-2,3,4,5-tetrahydrodipicolinic acid (HTPA), the product released by the DapA-catalyzed reaction.</text>
</comment>